<dbReference type="EMBL" id="AADN02036245">
    <property type="status" value="NOT_ANNOTATED_CDS"/>
    <property type="molecule type" value="Genomic_DNA"/>
</dbReference>
<dbReference type="RefSeq" id="NP_001263317.1">
    <property type="nucleotide sequence ID" value="NM_001276388.1"/>
</dbReference>
<dbReference type="FunCoup" id="E1BY51">
    <property type="interactions" value="123"/>
</dbReference>
<dbReference type="STRING" id="9031.ENSGALP00000058995"/>
<dbReference type="PaxDb" id="9031-ENSGALP00000043448"/>
<dbReference type="GeneID" id="421284"/>
<dbReference type="KEGG" id="gga:421284"/>
<dbReference type="CTD" id="200728"/>
<dbReference type="VEuPathDB" id="HostDB:geneid_421284"/>
<dbReference type="eggNOG" id="KOG4694">
    <property type="taxonomic scope" value="Eukaryota"/>
</dbReference>
<dbReference type="HOGENOM" id="CLU_092836_0_0_1"/>
<dbReference type="InParanoid" id="E1BY51"/>
<dbReference type="OrthoDB" id="311720at2759"/>
<dbReference type="PhylomeDB" id="E1BY51"/>
<dbReference type="TreeFam" id="TF323824"/>
<dbReference type="PRO" id="PR:E1BY51"/>
<dbReference type="Proteomes" id="UP000000539">
    <property type="component" value="Chromosome 3"/>
</dbReference>
<dbReference type="Bgee" id="ENSGALG00000026491">
    <property type="expression patterns" value="Expressed in testis and 11 other cell types or tissues"/>
</dbReference>
<dbReference type="GO" id="GO:0060170">
    <property type="term" value="C:ciliary membrane"/>
    <property type="evidence" value="ECO:0000250"/>
    <property type="project" value="UniProtKB"/>
</dbReference>
<dbReference type="GO" id="GO:0035869">
    <property type="term" value="C:ciliary transition zone"/>
    <property type="evidence" value="ECO:0000250"/>
    <property type="project" value="UniProtKB"/>
</dbReference>
<dbReference type="GO" id="GO:0036038">
    <property type="term" value="C:MKS complex"/>
    <property type="evidence" value="ECO:0000250"/>
    <property type="project" value="UniProtKB"/>
</dbReference>
<dbReference type="GO" id="GO:0060271">
    <property type="term" value="P:cilium assembly"/>
    <property type="evidence" value="ECO:0000250"/>
    <property type="project" value="UniProtKB"/>
</dbReference>
<dbReference type="GO" id="GO:1905515">
    <property type="term" value="P:non-motile cilium assembly"/>
    <property type="evidence" value="ECO:0000318"/>
    <property type="project" value="GO_Central"/>
</dbReference>
<dbReference type="GO" id="GO:0007224">
    <property type="term" value="P:smoothened signaling pathway"/>
    <property type="evidence" value="ECO:0000250"/>
    <property type="project" value="UniProtKB"/>
</dbReference>
<dbReference type="InterPro" id="IPR019184">
    <property type="entry name" value="Uncharacterised_TM-17"/>
</dbReference>
<dbReference type="PANTHER" id="PTHR13531">
    <property type="entry name" value="GEO07735P1-RELATED-RELATED"/>
    <property type="match status" value="1"/>
</dbReference>
<dbReference type="PANTHER" id="PTHR13531:SF14">
    <property type="entry name" value="TRANSMEMBRANE PROTEIN 17"/>
    <property type="match status" value="1"/>
</dbReference>
<dbReference type="Pfam" id="PF09799">
    <property type="entry name" value="Transmemb_17"/>
    <property type="match status" value="1"/>
</dbReference>
<reference key="1">
    <citation type="journal article" date="2004" name="Nature">
        <title>Sequence and comparative analysis of the chicken genome provide unique perspectives on vertebrate evolution.</title>
        <authorList>
            <person name="Hillier L.W."/>
            <person name="Miller W."/>
            <person name="Birney E."/>
            <person name="Warren W."/>
            <person name="Hardison R.C."/>
            <person name="Ponting C.P."/>
            <person name="Bork P."/>
            <person name="Burt D.W."/>
            <person name="Groenen M.A.M."/>
            <person name="Delany M.E."/>
            <person name="Dodgson J.B."/>
            <person name="Chinwalla A.T."/>
            <person name="Cliften P.F."/>
            <person name="Clifton S.W."/>
            <person name="Delehaunty K.D."/>
            <person name="Fronick C."/>
            <person name="Fulton R.S."/>
            <person name="Graves T.A."/>
            <person name="Kremitzki C."/>
            <person name="Layman D."/>
            <person name="Magrini V."/>
            <person name="McPherson J.D."/>
            <person name="Miner T.L."/>
            <person name="Minx P."/>
            <person name="Nash W.E."/>
            <person name="Nhan M.N."/>
            <person name="Nelson J.O."/>
            <person name="Oddy L.G."/>
            <person name="Pohl C.S."/>
            <person name="Randall-Maher J."/>
            <person name="Smith S.M."/>
            <person name="Wallis J.W."/>
            <person name="Yang S.-P."/>
            <person name="Romanov M.N."/>
            <person name="Rondelli C.M."/>
            <person name="Paton B."/>
            <person name="Smith J."/>
            <person name="Morrice D."/>
            <person name="Daniels L."/>
            <person name="Tempest H.G."/>
            <person name="Robertson L."/>
            <person name="Masabanda J.S."/>
            <person name="Griffin D.K."/>
            <person name="Vignal A."/>
            <person name="Fillon V."/>
            <person name="Jacobbson L."/>
            <person name="Kerje S."/>
            <person name="Andersson L."/>
            <person name="Crooijmans R.P."/>
            <person name="Aerts J."/>
            <person name="van der Poel J.J."/>
            <person name="Ellegren H."/>
            <person name="Caldwell R.B."/>
            <person name="Hubbard S.J."/>
            <person name="Grafham D.V."/>
            <person name="Kierzek A.M."/>
            <person name="McLaren S.R."/>
            <person name="Overton I.M."/>
            <person name="Arakawa H."/>
            <person name="Beattie K.J."/>
            <person name="Bezzubov Y."/>
            <person name="Boardman P.E."/>
            <person name="Bonfield J.K."/>
            <person name="Croning M.D.R."/>
            <person name="Davies R.M."/>
            <person name="Francis M.D."/>
            <person name="Humphray S.J."/>
            <person name="Scott C.E."/>
            <person name="Taylor R.G."/>
            <person name="Tickle C."/>
            <person name="Brown W.R.A."/>
            <person name="Rogers J."/>
            <person name="Buerstedde J.-M."/>
            <person name="Wilson S.A."/>
            <person name="Stubbs L."/>
            <person name="Ovcharenko I."/>
            <person name="Gordon L."/>
            <person name="Lucas S."/>
            <person name="Miller M.M."/>
            <person name="Inoko H."/>
            <person name="Shiina T."/>
            <person name="Kaufman J."/>
            <person name="Salomonsen J."/>
            <person name="Skjoedt K."/>
            <person name="Wong G.K.-S."/>
            <person name="Wang J."/>
            <person name="Liu B."/>
            <person name="Wang J."/>
            <person name="Yu J."/>
            <person name="Yang H."/>
            <person name="Nefedov M."/>
            <person name="Koriabine M."/>
            <person name="Dejong P.J."/>
            <person name="Goodstadt L."/>
            <person name="Webber C."/>
            <person name="Dickens N.J."/>
            <person name="Letunic I."/>
            <person name="Suyama M."/>
            <person name="Torrents D."/>
            <person name="von Mering C."/>
            <person name="Zdobnov E.M."/>
            <person name="Makova K."/>
            <person name="Nekrutenko A."/>
            <person name="Elnitski L."/>
            <person name="Eswara P."/>
            <person name="King D.C."/>
            <person name="Yang S.-P."/>
            <person name="Tyekucheva S."/>
            <person name="Radakrishnan A."/>
            <person name="Harris R.S."/>
            <person name="Chiaromonte F."/>
            <person name="Taylor J."/>
            <person name="He J."/>
            <person name="Rijnkels M."/>
            <person name="Griffiths-Jones S."/>
            <person name="Ureta-Vidal A."/>
            <person name="Hoffman M.M."/>
            <person name="Severin J."/>
            <person name="Searle S.M.J."/>
            <person name="Law A.S."/>
            <person name="Speed D."/>
            <person name="Waddington D."/>
            <person name="Cheng Z."/>
            <person name="Tuzun E."/>
            <person name="Eichler E."/>
            <person name="Bao Z."/>
            <person name="Flicek P."/>
            <person name="Shteynberg D.D."/>
            <person name="Brent M.R."/>
            <person name="Bye J.M."/>
            <person name="Huckle E.J."/>
            <person name="Chatterji S."/>
            <person name="Dewey C."/>
            <person name="Pachter L."/>
            <person name="Kouranov A."/>
            <person name="Mourelatos Z."/>
            <person name="Hatzigeorgiou A.G."/>
            <person name="Paterson A.H."/>
            <person name="Ivarie R."/>
            <person name="Brandstrom M."/>
            <person name="Axelsson E."/>
            <person name="Backstrom N."/>
            <person name="Berlin S."/>
            <person name="Webster M.T."/>
            <person name="Pourquie O."/>
            <person name="Reymond A."/>
            <person name="Ucla C."/>
            <person name="Antonarakis S.E."/>
            <person name="Long M."/>
            <person name="Emerson J.J."/>
            <person name="Betran E."/>
            <person name="Dupanloup I."/>
            <person name="Kaessmann H."/>
            <person name="Hinrichs A.S."/>
            <person name="Bejerano G."/>
            <person name="Furey T.S."/>
            <person name="Harte R.A."/>
            <person name="Raney B."/>
            <person name="Siepel A."/>
            <person name="Kent W.J."/>
            <person name="Haussler D."/>
            <person name="Eyras E."/>
            <person name="Castelo R."/>
            <person name="Abril J.F."/>
            <person name="Castellano S."/>
            <person name="Camara F."/>
            <person name="Parra G."/>
            <person name="Guigo R."/>
            <person name="Bourque G."/>
            <person name="Tesler G."/>
            <person name="Pevzner P.A."/>
            <person name="Smit A."/>
            <person name="Fulton L.A."/>
            <person name="Mardis E.R."/>
            <person name="Wilson R.K."/>
        </authorList>
    </citation>
    <scope>NUCLEOTIDE SEQUENCE [LARGE SCALE GENOMIC DNA]</scope>
    <source>
        <strain>Red jungle fowl</strain>
    </source>
</reference>
<protein>
    <recommendedName>
        <fullName>Transmembrane protein 17</fullName>
    </recommendedName>
</protein>
<name>TMM17_CHICK</name>
<organism>
    <name type="scientific">Gallus gallus</name>
    <name type="common">Chicken</name>
    <dbReference type="NCBI Taxonomy" id="9031"/>
    <lineage>
        <taxon>Eukaryota</taxon>
        <taxon>Metazoa</taxon>
        <taxon>Chordata</taxon>
        <taxon>Craniata</taxon>
        <taxon>Vertebrata</taxon>
        <taxon>Euteleostomi</taxon>
        <taxon>Archelosauria</taxon>
        <taxon>Archosauria</taxon>
        <taxon>Dinosauria</taxon>
        <taxon>Saurischia</taxon>
        <taxon>Theropoda</taxon>
        <taxon>Coelurosauria</taxon>
        <taxon>Aves</taxon>
        <taxon>Neognathae</taxon>
        <taxon>Galloanserae</taxon>
        <taxon>Galliformes</taxon>
        <taxon>Phasianidae</taxon>
        <taxon>Phasianinae</taxon>
        <taxon>Gallus</taxon>
    </lineage>
</organism>
<gene>
    <name type="primary">TMEM17</name>
</gene>
<evidence type="ECO:0000250" key="1"/>
<evidence type="ECO:0000255" key="2"/>
<evidence type="ECO:0000305" key="3"/>
<keyword id="KW-1003">Cell membrane</keyword>
<keyword id="KW-0966">Cell projection</keyword>
<keyword id="KW-0969">Cilium</keyword>
<keyword id="KW-0970">Cilium biogenesis/degradation</keyword>
<keyword id="KW-0472">Membrane</keyword>
<keyword id="KW-1185">Reference proteome</keyword>
<keyword id="KW-0812">Transmembrane</keyword>
<keyword id="KW-1133">Transmembrane helix</keyword>
<proteinExistence type="inferred from homology"/>
<sequence>MSLPEPLRRRLGSFSRTVFTDSRRAGPQYPSERADNEILSSLPLQMSLYFNVYFFPFWWLSTVFMLQLKYPVLSDYYKFILVTVMILTSLIEVIRLYLGYMGNLQEKVPELAGFWLLTLLLQLPVILFLLFNEGLNIQPLERSVNIIFALFLVFQVIAAFVTLKRMVNKLATHFHLNEFDRLEEHPVRHLYGPSKEENVLPMASMGPC</sequence>
<comment type="function">
    <text evidence="1">Transmembrane component of the tectonic-like complex, a complex localized at the transition zone of primary cilia and acting as a barrier that prevents diffusion of transmembrane proteins between the cilia and plasma membranes. Required for ciliogenesis and sonic hedgehog/SHH signaling (By similarity).</text>
</comment>
<comment type="subunit">
    <text evidence="1">Part of the tectonic-like complex (also named B9 complex).</text>
</comment>
<comment type="subcellular location">
    <subcellularLocation>
        <location evidence="1">Cell projection</location>
        <location evidence="1">Cilium membrane</location>
        <topology evidence="1">Multi-pass membrane protein</topology>
    </subcellularLocation>
    <text evidence="1">Localizes to the transition zone of primary cilia.</text>
</comment>
<comment type="similarity">
    <text evidence="3">Belongs to the TMEM17 family.</text>
</comment>
<feature type="chain" id="PRO_0000415837" description="Transmembrane protein 17">
    <location>
        <begin position="1"/>
        <end position="208"/>
    </location>
</feature>
<feature type="transmembrane region" description="Helical" evidence="2">
    <location>
        <begin position="46"/>
        <end position="66"/>
    </location>
</feature>
<feature type="transmembrane region" description="Helical" evidence="2">
    <location>
        <begin position="79"/>
        <end position="99"/>
    </location>
</feature>
<feature type="transmembrane region" description="Helical" evidence="2">
    <location>
        <begin position="111"/>
        <end position="131"/>
    </location>
</feature>
<feature type="transmembrane region" description="Helical" evidence="2">
    <location>
        <begin position="143"/>
        <end position="163"/>
    </location>
</feature>
<accession>E1BY51</accession>